<feature type="chain" id="PRO_0000115459" description="Small ribosomal subunit protein uS15">
    <location>
        <begin position="1"/>
        <end position="91"/>
    </location>
</feature>
<protein>
    <recommendedName>
        <fullName evidence="1">Small ribosomal subunit protein uS15</fullName>
    </recommendedName>
    <alternativeName>
        <fullName evidence="2">30S ribosomal protein S15</fullName>
    </alternativeName>
</protein>
<name>RS15_LEGPA</name>
<comment type="function">
    <text evidence="1">One of the primary rRNA binding proteins, it binds directly to 16S rRNA where it helps nucleate assembly of the platform of the 30S subunit by binding and bridging several RNA helices of the 16S rRNA.</text>
</comment>
<comment type="function">
    <text evidence="1">Forms an intersubunit bridge (bridge B4) with the 23S rRNA of the 50S subunit in the ribosome.</text>
</comment>
<comment type="subunit">
    <text evidence="1">Part of the 30S ribosomal subunit. Forms a bridge to the 50S subunit in the 70S ribosome, contacting the 23S rRNA.</text>
</comment>
<comment type="similarity">
    <text evidence="1">Belongs to the universal ribosomal protein uS15 family.</text>
</comment>
<organism>
    <name type="scientific">Legionella pneumophila (strain Paris)</name>
    <dbReference type="NCBI Taxonomy" id="297246"/>
    <lineage>
        <taxon>Bacteria</taxon>
        <taxon>Pseudomonadati</taxon>
        <taxon>Pseudomonadota</taxon>
        <taxon>Gammaproteobacteria</taxon>
        <taxon>Legionellales</taxon>
        <taxon>Legionellaceae</taxon>
        <taxon>Legionella</taxon>
    </lineage>
</organism>
<proteinExistence type="inferred from homology"/>
<keyword id="KW-0687">Ribonucleoprotein</keyword>
<keyword id="KW-0689">Ribosomal protein</keyword>
<keyword id="KW-0694">RNA-binding</keyword>
<keyword id="KW-0699">rRNA-binding</keyword>
<sequence>MSLNSAEKAEIINEYKRGDKDTGSPEVQVSLITGRIKYLTDHFKENKKDFHSRRGLQELVNKRRKLLKYLKRNDQARYQTLIQNLGLRDSY</sequence>
<reference key="1">
    <citation type="journal article" date="2004" name="Nat. Genet.">
        <title>Evidence in the Legionella pneumophila genome for exploitation of host cell functions and high genome plasticity.</title>
        <authorList>
            <person name="Cazalet C."/>
            <person name="Rusniok C."/>
            <person name="Brueggemann H."/>
            <person name="Zidane N."/>
            <person name="Magnier A."/>
            <person name="Ma L."/>
            <person name="Tichit M."/>
            <person name="Jarraud S."/>
            <person name="Bouchier C."/>
            <person name="Vandenesch F."/>
            <person name="Kunst F."/>
            <person name="Etienne J."/>
            <person name="Glaser P."/>
            <person name="Buchrieser C."/>
        </authorList>
    </citation>
    <scope>NUCLEOTIDE SEQUENCE [LARGE SCALE GENOMIC DNA]</scope>
    <source>
        <strain>Paris</strain>
    </source>
</reference>
<evidence type="ECO:0000255" key="1">
    <source>
        <dbReference type="HAMAP-Rule" id="MF_01343"/>
    </source>
</evidence>
<evidence type="ECO:0000305" key="2"/>
<accession>Q5X1C6</accession>
<gene>
    <name evidence="1" type="primary">rpsO</name>
    <name type="ordered locus">lpp2817</name>
</gene>
<dbReference type="EMBL" id="CR628336">
    <property type="protein sequence ID" value="CAH13970.1"/>
    <property type="molecule type" value="Genomic_DNA"/>
</dbReference>
<dbReference type="RefSeq" id="WP_015961800.1">
    <property type="nucleotide sequence ID" value="NC_006368.1"/>
</dbReference>
<dbReference type="SMR" id="Q5X1C6"/>
<dbReference type="KEGG" id="lpp:lpp2817"/>
<dbReference type="LegioList" id="lpp2817"/>
<dbReference type="HOGENOM" id="CLU_148518_0_0_6"/>
<dbReference type="GO" id="GO:0022627">
    <property type="term" value="C:cytosolic small ribosomal subunit"/>
    <property type="evidence" value="ECO:0007669"/>
    <property type="project" value="TreeGrafter"/>
</dbReference>
<dbReference type="GO" id="GO:0019843">
    <property type="term" value="F:rRNA binding"/>
    <property type="evidence" value="ECO:0007669"/>
    <property type="project" value="UniProtKB-UniRule"/>
</dbReference>
<dbReference type="GO" id="GO:0003735">
    <property type="term" value="F:structural constituent of ribosome"/>
    <property type="evidence" value="ECO:0007669"/>
    <property type="project" value="InterPro"/>
</dbReference>
<dbReference type="GO" id="GO:0006412">
    <property type="term" value="P:translation"/>
    <property type="evidence" value="ECO:0007669"/>
    <property type="project" value="UniProtKB-UniRule"/>
</dbReference>
<dbReference type="CDD" id="cd00353">
    <property type="entry name" value="Ribosomal_S15p_S13e"/>
    <property type="match status" value="1"/>
</dbReference>
<dbReference type="FunFam" id="1.10.287.10:FF:000002">
    <property type="entry name" value="30S ribosomal protein S15"/>
    <property type="match status" value="1"/>
</dbReference>
<dbReference type="Gene3D" id="6.10.250.3130">
    <property type="match status" value="1"/>
</dbReference>
<dbReference type="Gene3D" id="1.10.287.10">
    <property type="entry name" value="S15/NS1, RNA-binding"/>
    <property type="match status" value="1"/>
</dbReference>
<dbReference type="HAMAP" id="MF_01343_B">
    <property type="entry name" value="Ribosomal_uS15_B"/>
    <property type="match status" value="1"/>
</dbReference>
<dbReference type="InterPro" id="IPR000589">
    <property type="entry name" value="Ribosomal_uS15"/>
</dbReference>
<dbReference type="InterPro" id="IPR005290">
    <property type="entry name" value="Ribosomal_uS15_bac-type"/>
</dbReference>
<dbReference type="InterPro" id="IPR009068">
    <property type="entry name" value="uS15_NS1_RNA-bd_sf"/>
</dbReference>
<dbReference type="NCBIfam" id="TIGR00952">
    <property type="entry name" value="S15_bact"/>
    <property type="match status" value="1"/>
</dbReference>
<dbReference type="PANTHER" id="PTHR23321">
    <property type="entry name" value="RIBOSOMAL PROTEIN S15, BACTERIAL AND ORGANELLAR"/>
    <property type="match status" value="1"/>
</dbReference>
<dbReference type="PANTHER" id="PTHR23321:SF26">
    <property type="entry name" value="SMALL RIBOSOMAL SUBUNIT PROTEIN US15M"/>
    <property type="match status" value="1"/>
</dbReference>
<dbReference type="Pfam" id="PF00312">
    <property type="entry name" value="Ribosomal_S15"/>
    <property type="match status" value="1"/>
</dbReference>
<dbReference type="SMART" id="SM01387">
    <property type="entry name" value="Ribosomal_S15"/>
    <property type="match status" value="1"/>
</dbReference>
<dbReference type="SUPFAM" id="SSF47060">
    <property type="entry name" value="S15/NS1 RNA-binding domain"/>
    <property type="match status" value="1"/>
</dbReference>
<dbReference type="PROSITE" id="PS00362">
    <property type="entry name" value="RIBOSOMAL_S15"/>
    <property type="match status" value="1"/>
</dbReference>